<protein>
    <recommendedName>
        <fullName evidence="1">Ribosomal RNA small subunit methyltransferase I</fullName>
        <ecNumber evidence="1">2.1.1.198</ecNumber>
    </recommendedName>
    <alternativeName>
        <fullName evidence="1">16S rRNA 2'-O-ribose C1402 methyltransferase</fullName>
    </alternativeName>
    <alternativeName>
        <fullName evidence="1">rRNA (cytidine-2'-O-)-methyltransferase RsmI</fullName>
    </alternativeName>
</protein>
<sequence length="285" mass="29647">MSSGRLLLGATPLGQPSDASPRLAAALATADVVAAEDTRRVRKLAKALDIRIGGRVVSLFDRVEALRVTALLDAINNGATVLVVSDAGTPVISDPGYRLVAACIDAGVSVTCLPGPSAVTTALVISGLPAEKFCFEGFAPRKGAARRAWLAELAEERRTCVFFESPRRLAACLNDAVEQLGGARPAAICRELTKVHEEVVRGSLDELAIWAAGGVLGEITVVVAGAAPHAELSSLIAQVEEFVAAGIRVKDACSEVAAAHPGVRTRQLYDAVLQSRRETGGPAQP</sequence>
<comment type="function">
    <text evidence="1">Catalyzes the 2'-O-methylation of the ribose of cytidine 1402 (C1402) in 16S rRNA.</text>
</comment>
<comment type="catalytic activity">
    <reaction evidence="1">
        <text>cytidine(1402) in 16S rRNA + S-adenosyl-L-methionine = 2'-O-methylcytidine(1402) in 16S rRNA + S-adenosyl-L-homocysteine + H(+)</text>
        <dbReference type="Rhea" id="RHEA:42924"/>
        <dbReference type="Rhea" id="RHEA-COMP:10285"/>
        <dbReference type="Rhea" id="RHEA-COMP:10286"/>
        <dbReference type="ChEBI" id="CHEBI:15378"/>
        <dbReference type="ChEBI" id="CHEBI:57856"/>
        <dbReference type="ChEBI" id="CHEBI:59789"/>
        <dbReference type="ChEBI" id="CHEBI:74495"/>
        <dbReference type="ChEBI" id="CHEBI:82748"/>
        <dbReference type="EC" id="2.1.1.198"/>
    </reaction>
</comment>
<comment type="subcellular location">
    <subcellularLocation>
        <location evidence="1">Cytoplasm</location>
    </subcellularLocation>
</comment>
<comment type="similarity">
    <text evidence="1">Belongs to the methyltransferase superfamily. RsmI family.</text>
</comment>
<gene>
    <name evidence="1" type="primary">rsmI</name>
    <name type="ordered locus">MT1032</name>
</gene>
<dbReference type="EC" id="2.1.1.198" evidence="1"/>
<dbReference type="EMBL" id="AE000516">
    <property type="protein sequence ID" value="AAK45282.1"/>
    <property type="molecule type" value="Genomic_DNA"/>
</dbReference>
<dbReference type="PIR" id="F70602">
    <property type="entry name" value="F70602"/>
</dbReference>
<dbReference type="RefSeq" id="WP_003917390.1">
    <property type="nucleotide sequence ID" value="NC_002755.2"/>
</dbReference>
<dbReference type="SMR" id="P9WGW6"/>
<dbReference type="KEGG" id="mtc:MT1032"/>
<dbReference type="PATRIC" id="fig|83331.31.peg.1107"/>
<dbReference type="HOGENOM" id="CLU_044779_0_0_11"/>
<dbReference type="Proteomes" id="UP000001020">
    <property type="component" value="Chromosome"/>
</dbReference>
<dbReference type="GO" id="GO:0005737">
    <property type="term" value="C:cytoplasm"/>
    <property type="evidence" value="ECO:0007669"/>
    <property type="project" value="UniProtKB-SubCell"/>
</dbReference>
<dbReference type="GO" id="GO:0070677">
    <property type="term" value="F:rRNA (cytosine-2'-O-)-methyltransferase activity"/>
    <property type="evidence" value="ECO:0007669"/>
    <property type="project" value="UniProtKB-UniRule"/>
</dbReference>
<dbReference type="CDD" id="cd11648">
    <property type="entry name" value="RsmI"/>
    <property type="match status" value="1"/>
</dbReference>
<dbReference type="FunFam" id="3.30.950.10:FF:000002">
    <property type="entry name" value="Ribosomal RNA small subunit methyltransferase I"/>
    <property type="match status" value="1"/>
</dbReference>
<dbReference type="FunFam" id="3.40.1010.10:FF:000007">
    <property type="entry name" value="Ribosomal RNA small subunit methyltransferase I"/>
    <property type="match status" value="1"/>
</dbReference>
<dbReference type="Gene3D" id="3.40.1010.10">
    <property type="entry name" value="Cobalt-precorrin-4 Transmethylase, Domain 1"/>
    <property type="match status" value="1"/>
</dbReference>
<dbReference type="Gene3D" id="3.30.950.10">
    <property type="entry name" value="Methyltransferase, Cobalt-precorrin-4 Transmethylase, Domain 2"/>
    <property type="match status" value="1"/>
</dbReference>
<dbReference type="HAMAP" id="MF_01877">
    <property type="entry name" value="16SrRNA_methyltr_I"/>
    <property type="match status" value="1"/>
</dbReference>
<dbReference type="InterPro" id="IPR000878">
    <property type="entry name" value="4pyrrol_Mease"/>
</dbReference>
<dbReference type="InterPro" id="IPR035996">
    <property type="entry name" value="4pyrrol_Methylase_sf"/>
</dbReference>
<dbReference type="InterPro" id="IPR014777">
    <property type="entry name" value="4pyrrole_Mease_sub1"/>
</dbReference>
<dbReference type="InterPro" id="IPR014776">
    <property type="entry name" value="4pyrrole_Mease_sub2"/>
</dbReference>
<dbReference type="InterPro" id="IPR008189">
    <property type="entry name" value="rRNA_ssu_MeTfrase_I"/>
</dbReference>
<dbReference type="InterPro" id="IPR018063">
    <property type="entry name" value="SAM_MeTrfase_RsmI_CS"/>
</dbReference>
<dbReference type="NCBIfam" id="TIGR00096">
    <property type="entry name" value="16S rRNA (cytidine(1402)-2'-O)-methyltransferase"/>
    <property type="match status" value="1"/>
</dbReference>
<dbReference type="PANTHER" id="PTHR46111">
    <property type="entry name" value="RIBOSOMAL RNA SMALL SUBUNIT METHYLTRANSFERASE I"/>
    <property type="match status" value="1"/>
</dbReference>
<dbReference type="PANTHER" id="PTHR46111:SF1">
    <property type="entry name" value="RIBOSOMAL RNA SMALL SUBUNIT METHYLTRANSFERASE I"/>
    <property type="match status" value="1"/>
</dbReference>
<dbReference type="Pfam" id="PF00590">
    <property type="entry name" value="TP_methylase"/>
    <property type="match status" value="1"/>
</dbReference>
<dbReference type="PIRSF" id="PIRSF005917">
    <property type="entry name" value="MTase_YraL"/>
    <property type="match status" value="1"/>
</dbReference>
<dbReference type="SUPFAM" id="SSF53790">
    <property type="entry name" value="Tetrapyrrole methylase"/>
    <property type="match status" value="1"/>
</dbReference>
<dbReference type="PROSITE" id="PS01296">
    <property type="entry name" value="RSMI"/>
    <property type="match status" value="1"/>
</dbReference>
<accession>P9WGW6</accession>
<accession>L0T856</accession>
<accession>O05588</accession>
<accession>P0A640</accession>
<feature type="chain" id="PRO_0000428290" description="Ribosomal RNA small subunit methyltransferase I">
    <location>
        <begin position="1"/>
        <end position="285"/>
    </location>
</feature>
<organism>
    <name type="scientific">Mycobacterium tuberculosis (strain CDC 1551 / Oshkosh)</name>
    <dbReference type="NCBI Taxonomy" id="83331"/>
    <lineage>
        <taxon>Bacteria</taxon>
        <taxon>Bacillati</taxon>
        <taxon>Actinomycetota</taxon>
        <taxon>Actinomycetes</taxon>
        <taxon>Mycobacteriales</taxon>
        <taxon>Mycobacteriaceae</taxon>
        <taxon>Mycobacterium</taxon>
        <taxon>Mycobacterium tuberculosis complex</taxon>
    </lineage>
</organism>
<evidence type="ECO:0000255" key="1">
    <source>
        <dbReference type="HAMAP-Rule" id="MF_01877"/>
    </source>
</evidence>
<keyword id="KW-0963">Cytoplasm</keyword>
<keyword id="KW-0489">Methyltransferase</keyword>
<keyword id="KW-1185">Reference proteome</keyword>
<keyword id="KW-0698">rRNA processing</keyword>
<keyword id="KW-0949">S-adenosyl-L-methionine</keyword>
<keyword id="KW-0808">Transferase</keyword>
<name>RSMI_MYCTO</name>
<proteinExistence type="inferred from homology"/>
<reference key="1">
    <citation type="journal article" date="2002" name="J. Bacteriol.">
        <title>Whole-genome comparison of Mycobacterium tuberculosis clinical and laboratory strains.</title>
        <authorList>
            <person name="Fleischmann R.D."/>
            <person name="Alland D."/>
            <person name="Eisen J.A."/>
            <person name="Carpenter L."/>
            <person name="White O."/>
            <person name="Peterson J.D."/>
            <person name="DeBoy R.T."/>
            <person name="Dodson R.J."/>
            <person name="Gwinn M.L."/>
            <person name="Haft D.H."/>
            <person name="Hickey E.K."/>
            <person name="Kolonay J.F."/>
            <person name="Nelson W.C."/>
            <person name="Umayam L.A."/>
            <person name="Ermolaeva M.D."/>
            <person name="Salzberg S.L."/>
            <person name="Delcher A."/>
            <person name="Utterback T.R."/>
            <person name="Weidman J.F."/>
            <person name="Khouri H.M."/>
            <person name="Gill J."/>
            <person name="Mikula A."/>
            <person name="Bishai W."/>
            <person name="Jacobs W.R. Jr."/>
            <person name="Venter J.C."/>
            <person name="Fraser C.M."/>
        </authorList>
    </citation>
    <scope>NUCLEOTIDE SEQUENCE [LARGE SCALE GENOMIC DNA]</scope>
    <source>
        <strain>CDC 1551 / Oshkosh</strain>
    </source>
</reference>